<name>YAAA_ECOBW</name>
<protein>
    <recommendedName>
        <fullName evidence="1">UPF0246 protein YaaA</fullName>
    </recommendedName>
</protein>
<proteinExistence type="inferred from homology"/>
<evidence type="ECO:0000255" key="1">
    <source>
        <dbReference type="HAMAP-Rule" id="MF_00652"/>
    </source>
</evidence>
<feature type="chain" id="PRO_1000212424" description="UPF0246 protein YaaA">
    <location>
        <begin position="1"/>
        <end position="258"/>
    </location>
</feature>
<gene>
    <name evidence="1" type="primary">yaaA</name>
    <name type="ordered locus">BWG_0006</name>
</gene>
<comment type="similarity">
    <text evidence="1">Belongs to the UPF0246 family.</text>
</comment>
<accession>C4ZPT3</accession>
<organism>
    <name type="scientific">Escherichia coli (strain K12 / MC4100 / BW2952)</name>
    <dbReference type="NCBI Taxonomy" id="595496"/>
    <lineage>
        <taxon>Bacteria</taxon>
        <taxon>Pseudomonadati</taxon>
        <taxon>Pseudomonadota</taxon>
        <taxon>Gammaproteobacteria</taxon>
        <taxon>Enterobacterales</taxon>
        <taxon>Enterobacteriaceae</taxon>
        <taxon>Escherichia</taxon>
    </lineage>
</organism>
<reference key="1">
    <citation type="journal article" date="2009" name="J. Bacteriol.">
        <title>Genomic sequencing reveals regulatory mutations and recombinational events in the widely used MC4100 lineage of Escherichia coli K-12.</title>
        <authorList>
            <person name="Ferenci T."/>
            <person name="Zhou Z."/>
            <person name="Betteridge T."/>
            <person name="Ren Y."/>
            <person name="Liu Y."/>
            <person name="Feng L."/>
            <person name="Reeves P.R."/>
            <person name="Wang L."/>
        </authorList>
    </citation>
    <scope>NUCLEOTIDE SEQUENCE [LARGE SCALE GENOMIC DNA]</scope>
    <source>
        <strain>K12 / MC4100 / BW2952</strain>
    </source>
</reference>
<sequence>MLILISPAKTLDYQSPLTTTRYTLPELLDNSQQLIHEARKLTPPQISTLMRISDKLAGINAARFHDWQPDFTPANARQAILAFKGDVYTGLQAETFSEDDFDFAQQHLRMLSGLYGVLRPLDLMQPYRLEMGIRLENARGKDLYQFWGDIITNKLNEALAAQGDNVVINLASDEYFKSVKPKKLNAEIIKPVFLDEKNGKFKIISFYAKKARGLMSRFIIENRLTKPEQLTGFNSEGYFFDEDSSSNGELVFKRYEQR</sequence>
<dbReference type="EMBL" id="CP001396">
    <property type="protein sequence ID" value="ACR62262.1"/>
    <property type="molecule type" value="Genomic_DNA"/>
</dbReference>
<dbReference type="RefSeq" id="WP_000906197.1">
    <property type="nucleotide sequence ID" value="NC_012759.1"/>
</dbReference>
<dbReference type="SMR" id="C4ZPT3"/>
<dbReference type="KEGG" id="ebw:BWG_0006"/>
<dbReference type="HOGENOM" id="CLU_061989_0_0_6"/>
<dbReference type="GO" id="GO:0005829">
    <property type="term" value="C:cytosol"/>
    <property type="evidence" value="ECO:0007669"/>
    <property type="project" value="TreeGrafter"/>
</dbReference>
<dbReference type="GO" id="GO:0033194">
    <property type="term" value="P:response to hydroperoxide"/>
    <property type="evidence" value="ECO:0007669"/>
    <property type="project" value="TreeGrafter"/>
</dbReference>
<dbReference type="HAMAP" id="MF_00652">
    <property type="entry name" value="UPF0246"/>
    <property type="match status" value="1"/>
</dbReference>
<dbReference type="InterPro" id="IPR005583">
    <property type="entry name" value="YaaA"/>
</dbReference>
<dbReference type="NCBIfam" id="NF002541">
    <property type="entry name" value="PRK02101.1-1"/>
    <property type="match status" value="1"/>
</dbReference>
<dbReference type="NCBIfam" id="NF002542">
    <property type="entry name" value="PRK02101.1-3"/>
    <property type="match status" value="1"/>
</dbReference>
<dbReference type="PANTHER" id="PTHR30283:SF4">
    <property type="entry name" value="PEROXIDE STRESS RESISTANCE PROTEIN YAAA"/>
    <property type="match status" value="1"/>
</dbReference>
<dbReference type="PANTHER" id="PTHR30283">
    <property type="entry name" value="PEROXIDE STRESS RESPONSE PROTEIN YAAA"/>
    <property type="match status" value="1"/>
</dbReference>
<dbReference type="Pfam" id="PF03883">
    <property type="entry name" value="H2O2_YaaD"/>
    <property type="match status" value="1"/>
</dbReference>